<comment type="function">
    <text evidence="1">The alpha subunit is responsible for the aldol cleavage of indoleglycerol phosphate to indole and glyceraldehyde 3-phosphate.</text>
</comment>
<comment type="catalytic activity">
    <reaction evidence="1">
        <text>(1S,2R)-1-C-(indol-3-yl)glycerol 3-phosphate + L-serine = D-glyceraldehyde 3-phosphate + L-tryptophan + H2O</text>
        <dbReference type="Rhea" id="RHEA:10532"/>
        <dbReference type="ChEBI" id="CHEBI:15377"/>
        <dbReference type="ChEBI" id="CHEBI:33384"/>
        <dbReference type="ChEBI" id="CHEBI:57912"/>
        <dbReference type="ChEBI" id="CHEBI:58866"/>
        <dbReference type="ChEBI" id="CHEBI:59776"/>
        <dbReference type="EC" id="4.2.1.20"/>
    </reaction>
</comment>
<comment type="pathway">
    <text evidence="1">Amino-acid biosynthesis; L-tryptophan biosynthesis; L-tryptophan from chorismate: step 5/5.</text>
</comment>
<comment type="subunit">
    <text evidence="1">Tetramer of two alpha and two beta chains.</text>
</comment>
<comment type="similarity">
    <text evidence="1">Belongs to the TrpA family.</text>
</comment>
<feature type="chain" id="PRO_1000057856" description="Tryptophan synthase alpha chain">
    <location>
        <begin position="1"/>
        <end position="268"/>
    </location>
</feature>
<feature type="active site" description="Proton acceptor" evidence="1">
    <location>
        <position position="49"/>
    </location>
</feature>
<feature type="active site" description="Proton acceptor" evidence="1">
    <location>
        <position position="60"/>
    </location>
</feature>
<organism>
    <name type="scientific">Serratia proteamaculans (strain 568)</name>
    <dbReference type="NCBI Taxonomy" id="399741"/>
    <lineage>
        <taxon>Bacteria</taxon>
        <taxon>Pseudomonadati</taxon>
        <taxon>Pseudomonadota</taxon>
        <taxon>Gammaproteobacteria</taxon>
        <taxon>Enterobacterales</taxon>
        <taxon>Yersiniaceae</taxon>
        <taxon>Serratia</taxon>
    </lineage>
</organism>
<dbReference type="EC" id="4.2.1.20" evidence="1"/>
<dbReference type="EMBL" id="CP000826">
    <property type="protein sequence ID" value="ABV41773.1"/>
    <property type="molecule type" value="Genomic_DNA"/>
</dbReference>
<dbReference type="SMR" id="A8GF83"/>
<dbReference type="STRING" id="399741.Spro_2672"/>
<dbReference type="KEGG" id="spe:Spro_2672"/>
<dbReference type="eggNOG" id="COG0159">
    <property type="taxonomic scope" value="Bacteria"/>
</dbReference>
<dbReference type="HOGENOM" id="CLU_016734_0_4_6"/>
<dbReference type="OrthoDB" id="9804578at2"/>
<dbReference type="UniPathway" id="UPA00035">
    <property type="reaction ID" value="UER00044"/>
</dbReference>
<dbReference type="GO" id="GO:0005829">
    <property type="term" value="C:cytosol"/>
    <property type="evidence" value="ECO:0007669"/>
    <property type="project" value="TreeGrafter"/>
</dbReference>
<dbReference type="GO" id="GO:0004834">
    <property type="term" value="F:tryptophan synthase activity"/>
    <property type="evidence" value="ECO:0007669"/>
    <property type="project" value="UniProtKB-UniRule"/>
</dbReference>
<dbReference type="CDD" id="cd04724">
    <property type="entry name" value="Tryptophan_synthase_alpha"/>
    <property type="match status" value="1"/>
</dbReference>
<dbReference type="FunFam" id="3.20.20.70:FF:000037">
    <property type="entry name" value="Tryptophan synthase alpha chain"/>
    <property type="match status" value="1"/>
</dbReference>
<dbReference type="Gene3D" id="3.20.20.70">
    <property type="entry name" value="Aldolase class I"/>
    <property type="match status" value="1"/>
</dbReference>
<dbReference type="HAMAP" id="MF_00131">
    <property type="entry name" value="Trp_synth_alpha"/>
    <property type="match status" value="1"/>
</dbReference>
<dbReference type="InterPro" id="IPR013785">
    <property type="entry name" value="Aldolase_TIM"/>
</dbReference>
<dbReference type="InterPro" id="IPR011060">
    <property type="entry name" value="RibuloseP-bd_barrel"/>
</dbReference>
<dbReference type="InterPro" id="IPR018204">
    <property type="entry name" value="Trp_synthase_alpha_AS"/>
</dbReference>
<dbReference type="InterPro" id="IPR002028">
    <property type="entry name" value="Trp_synthase_suA"/>
</dbReference>
<dbReference type="NCBIfam" id="TIGR00262">
    <property type="entry name" value="trpA"/>
    <property type="match status" value="1"/>
</dbReference>
<dbReference type="PANTHER" id="PTHR43406:SF1">
    <property type="entry name" value="TRYPTOPHAN SYNTHASE ALPHA CHAIN, CHLOROPLASTIC"/>
    <property type="match status" value="1"/>
</dbReference>
<dbReference type="PANTHER" id="PTHR43406">
    <property type="entry name" value="TRYPTOPHAN SYNTHASE, ALPHA CHAIN"/>
    <property type="match status" value="1"/>
</dbReference>
<dbReference type="Pfam" id="PF00290">
    <property type="entry name" value="Trp_syntA"/>
    <property type="match status" value="1"/>
</dbReference>
<dbReference type="SUPFAM" id="SSF51366">
    <property type="entry name" value="Ribulose-phoshate binding barrel"/>
    <property type="match status" value="1"/>
</dbReference>
<dbReference type="PROSITE" id="PS00167">
    <property type="entry name" value="TRP_SYNTHASE_ALPHA"/>
    <property type="match status" value="1"/>
</dbReference>
<keyword id="KW-0028">Amino-acid biosynthesis</keyword>
<keyword id="KW-0057">Aromatic amino acid biosynthesis</keyword>
<keyword id="KW-0456">Lyase</keyword>
<keyword id="KW-0822">Tryptophan biosynthesis</keyword>
<evidence type="ECO:0000255" key="1">
    <source>
        <dbReference type="HAMAP-Rule" id="MF_00131"/>
    </source>
</evidence>
<proteinExistence type="inferred from homology"/>
<reference key="1">
    <citation type="submission" date="2007-09" db="EMBL/GenBank/DDBJ databases">
        <title>Complete sequence of chromosome of Serratia proteamaculans 568.</title>
        <authorList>
            <consortium name="US DOE Joint Genome Institute"/>
            <person name="Copeland A."/>
            <person name="Lucas S."/>
            <person name="Lapidus A."/>
            <person name="Barry K."/>
            <person name="Glavina del Rio T."/>
            <person name="Dalin E."/>
            <person name="Tice H."/>
            <person name="Pitluck S."/>
            <person name="Chain P."/>
            <person name="Malfatti S."/>
            <person name="Shin M."/>
            <person name="Vergez L."/>
            <person name="Schmutz J."/>
            <person name="Larimer F."/>
            <person name="Land M."/>
            <person name="Hauser L."/>
            <person name="Kyrpides N."/>
            <person name="Kim E."/>
            <person name="Taghavi S."/>
            <person name="Newman L."/>
            <person name="Vangronsveld J."/>
            <person name="van der Lelie D."/>
            <person name="Richardson P."/>
        </authorList>
    </citation>
    <scope>NUCLEOTIDE SEQUENCE [LARGE SCALE GENOMIC DNA]</scope>
    <source>
        <strain>568</strain>
    </source>
</reference>
<sequence>MERYQQLFDRLASNKEGAFVPFVTLGDPNPALSLQIIDTLVEAGADALELGIPFSDPLADGPTIQSAALRAFASGVTPTQCFEMLAAIRQKHPSMPIGLLMYANLVFHKGIDAFYQRCAEVGVDSVLIADVPYEESAPFRAAAIRHGIAPIFICPPNADDDLLREISSHGRGYTYLLSRAGVTGTESRAQLPLHHLVNKLREYHAAPPLQGFGISEPAQVRDALQAGAAGAISGSAIVKIIEQNHTQPAEMLTRLATFVSEMKAATRA</sequence>
<gene>
    <name evidence="1" type="primary">trpA</name>
    <name type="ordered locus">Spro_2672</name>
</gene>
<name>TRPA_SERP5</name>
<protein>
    <recommendedName>
        <fullName evidence="1">Tryptophan synthase alpha chain</fullName>
        <ecNumber evidence="1">4.2.1.20</ecNumber>
    </recommendedName>
</protein>
<accession>A8GF83</accession>